<dbReference type="EC" id="1.1.1.94" evidence="1"/>
<dbReference type="EMBL" id="CP000814">
    <property type="protein sequence ID" value="ABV52739.1"/>
    <property type="molecule type" value="Genomic_DNA"/>
</dbReference>
<dbReference type="SMR" id="A8FMQ2"/>
<dbReference type="KEGG" id="cju:C8J_1140"/>
<dbReference type="HOGENOM" id="CLU_033449_0_2_7"/>
<dbReference type="UniPathway" id="UPA00940"/>
<dbReference type="GO" id="GO:0005829">
    <property type="term" value="C:cytosol"/>
    <property type="evidence" value="ECO:0007669"/>
    <property type="project" value="TreeGrafter"/>
</dbReference>
<dbReference type="GO" id="GO:0047952">
    <property type="term" value="F:glycerol-3-phosphate dehydrogenase [NAD(P)+] activity"/>
    <property type="evidence" value="ECO:0007669"/>
    <property type="project" value="UniProtKB-UniRule"/>
</dbReference>
<dbReference type="GO" id="GO:0051287">
    <property type="term" value="F:NAD binding"/>
    <property type="evidence" value="ECO:0007669"/>
    <property type="project" value="InterPro"/>
</dbReference>
<dbReference type="GO" id="GO:0005975">
    <property type="term" value="P:carbohydrate metabolic process"/>
    <property type="evidence" value="ECO:0007669"/>
    <property type="project" value="InterPro"/>
</dbReference>
<dbReference type="GO" id="GO:0046167">
    <property type="term" value="P:glycerol-3-phosphate biosynthetic process"/>
    <property type="evidence" value="ECO:0007669"/>
    <property type="project" value="UniProtKB-UniRule"/>
</dbReference>
<dbReference type="GO" id="GO:0046168">
    <property type="term" value="P:glycerol-3-phosphate catabolic process"/>
    <property type="evidence" value="ECO:0007669"/>
    <property type="project" value="InterPro"/>
</dbReference>
<dbReference type="GO" id="GO:0006650">
    <property type="term" value="P:glycerophospholipid metabolic process"/>
    <property type="evidence" value="ECO:0007669"/>
    <property type="project" value="UniProtKB-UniRule"/>
</dbReference>
<dbReference type="GO" id="GO:0008654">
    <property type="term" value="P:phospholipid biosynthetic process"/>
    <property type="evidence" value="ECO:0007669"/>
    <property type="project" value="UniProtKB-KW"/>
</dbReference>
<dbReference type="FunFam" id="1.10.1040.10:FF:000025">
    <property type="entry name" value="Glycerol-3-phosphate dehydrogenase [NAD(P)+]"/>
    <property type="match status" value="1"/>
</dbReference>
<dbReference type="Gene3D" id="1.10.1040.10">
    <property type="entry name" value="N-(1-d-carboxylethyl)-l-norvaline Dehydrogenase, domain 2"/>
    <property type="match status" value="1"/>
</dbReference>
<dbReference type="Gene3D" id="3.40.50.720">
    <property type="entry name" value="NAD(P)-binding Rossmann-like Domain"/>
    <property type="match status" value="1"/>
</dbReference>
<dbReference type="HAMAP" id="MF_00394">
    <property type="entry name" value="NAD_Glyc3P_dehydrog"/>
    <property type="match status" value="1"/>
</dbReference>
<dbReference type="InterPro" id="IPR008927">
    <property type="entry name" value="6-PGluconate_DH-like_C_sf"/>
</dbReference>
<dbReference type="InterPro" id="IPR013328">
    <property type="entry name" value="6PGD_dom2"/>
</dbReference>
<dbReference type="InterPro" id="IPR006168">
    <property type="entry name" value="G3P_DH_NAD-dep"/>
</dbReference>
<dbReference type="InterPro" id="IPR006109">
    <property type="entry name" value="G3P_DH_NAD-dep_C"/>
</dbReference>
<dbReference type="InterPro" id="IPR011128">
    <property type="entry name" value="G3P_DH_NAD-dep_N"/>
</dbReference>
<dbReference type="InterPro" id="IPR036291">
    <property type="entry name" value="NAD(P)-bd_dom_sf"/>
</dbReference>
<dbReference type="NCBIfam" id="NF000940">
    <property type="entry name" value="PRK00094.1-2"/>
    <property type="match status" value="1"/>
</dbReference>
<dbReference type="NCBIfam" id="NF000942">
    <property type="entry name" value="PRK00094.1-4"/>
    <property type="match status" value="1"/>
</dbReference>
<dbReference type="NCBIfam" id="NF000943">
    <property type="entry name" value="PRK00094.2-1"/>
    <property type="match status" value="1"/>
</dbReference>
<dbReference type="PANTHER" id="PTHR11728">
    <property type="entry name" value="GLYCEROL-3-PHOSPHATE DEHYDROGENASE"/>
    <property type="match status" value="1"/>
</dbReference>
<dbReference type="PANTHER" id="PTHR11728:SF1">
    <property type="entry name" value="GLYCEROL-3-PHOSPHATE DEHYDROGENASE [NAD(+)] 2, CHLOROPLASTIC"/>
    <property type="match status" value="1"/>
</dbReference>
<dbReference type="Pfam" id="PF07479">
    <property type="entry name" value="NAD_Gly3P_dh_C"/>
    <property type="match status" value="1"/>
</dbReference>
<dbReference type="Pfam" id="PF01210">
    <property type="entry name" value="NAD_Gly3P_dh_N"/>
    <property type="match status" value="1"/>
</dbReference>
<dbReference type="PIRSF" id="PIRSF000114">
    <property type="entry name" value="Glycerol-3-P_dh"/>
    <property type="match status" value="1"/>
</dbReference>
<dbReference type="SUPFAM" id="SSF48179">
    <property type="entry name" value="6-phosphogluconate dehydrogenase C-terminal domain-like"/>
    <property type="match status" value="1"/>
</dbReference>
<dbReference type="SUPFAM" id="SSF51735">
    <property type="entry name" value="NAD(P)-binding Rossmann-fold domains"/>
    <property type="match status" value="1"/>
</dbReference>
<dbReference type="PROSITE" id="PS00957">
    <property type="entry name" value="NAD_G3PDH"/>
    <property type="match status" value="1"/>
</dbReference>
<proteinExistence type="inferred from homology"/>
<name>GPDA_CAMJ8</name>
<sequence length="297" mass="32704">MRIAVIGAGKWGSALHLALKENHNCFISSLHQRDLEDFVSIKEALECEYLVFALSSQGMRAWLKENFINKGQKILIASKGIEDQSCQFLDEIFLDFVPKENFCVLSGPSFAAEVMQKLPTALMISGINQELCKKFASFFPDFIKTYIDNDVRGAEICGAYKNVLAIASGISDGLKLGNNARAALISRGLIEMHRFGKFFGAKEETFLGLSGAGDLFLTATSVLSRNYRVGLKLAQNQKLDSILVELNEVAEGVKTAYAIEKLAKMKGIYTPIVNEVVAIFKGKSVQEATQSLLKQND</sequence>
<organism>
    <name type="scientific">Campylobacter jejuni subsp. jejuni serotype O:6 (strain 81116 / NCTC 11828)</name>
    <dbReference type="NCBI Taxonomy" id="407148"/>
    <lineage>
        <taxon>Bacteria</taxon>
        <taxon>Pseudomonadati</taxon>
        <taxon>Campylobacterota</taxon>
        <taxon>Epsilonproteobacteria</taxon>
        <taxon>Campylobacterales</taxon>
        <taxon>Campylobacteraceae</taxon>
        <taxon>Campylobacter</taxon>
    </lineage>
</organism>
<keyword id="KW-0963">Cytoplasm</keyword>
<keyword id="KW-0444">Lipid biosynthesis</keyword>
<keyword id="KW-0443">Lipid metabolism</keyword>
<keyword id="KW-0520">NAD</keyword>
<keyword id="KW-0521">NADP</keyword>
<keyword id="KW-0547">Nucleotide-binding</keyword>
<keyword id="KW-0560">Oxidoreductase</keyword>
<keyword id="KW-0594">Phospholipid biosynthesis</keyword>
<keyword id="KW-1208">Phospholipid metabolism</keyword>
<gene>
    <name evidence="1" type="primary">gpsA</name>
    <name type="ordered locus">C8J_1140</name>
</gene>
<accession>A8FMQ2</accession>
<reference key="1">
    <citation type="journal article" date="2007" name="J. Bacteriol.">
        <title>The complete genome sequence of Campylobacter jejuni strain 81116 (NCTC11828).</title>
        <authorList>
            <person name="Pearson B.M."/>
            <person name="Gaskin D.J.H."/>
            <person name="Segers R.P.A.M."/>
            <person name="Wells J.M."/>
            <person name="Nuijten P.J.M."/>
            <person name="van Vliet A.H.M."/>
        </authorList>
    </citation>
    <scope>NUCLEOTIDE SEQUENCE [LARGE SCALE GENOMIC DNA]</scope>
    <source>
        <strain>81116 / NCTC 11828</strain>
    </source>
</reference>
<feature type="chain" id="PRO_1000072230" description="Glycerol-3-phosphate dehydrogenase [NAD(P)+]">
    <location>
        <begin position="1"/>
        <end position="297"/>
    </location>
</feature>
<feature type="active site" description="Proton acceptor" evidence="1">
    <location>
        <position position="161"/>
    </location>
</feature>
<feature type="binding site" evidence="1">
    <location>
        <position position="11"/>
    </location>
    <ligand>
        <name>NADPH</name>
        <dbReference type="ChEBI" id="CHEBI:57783"/>
    </ligand>
</feature>
<feature type="binding site" evidence="1">
    <location>
        <position position="33"/>
    </location>
    <ligand>
        <name>NADPH</name>
        <dbReference type="ChEBI" id="CHEBI:57783"/>
    </ligand>
</feature>
<feature type="binding site" evidence="1">
    <location>
        <position position="79"/>
    </location>
    <ligand>
        <name>NADPH</name>
        <dbReference type="ChEBI" id="CHEBI:57783"/>
    </ligand>
</feature>
<feature type="binding site" evidence="1">
    <location>
        <position position="79"/>
    </location>
    <ligand>
        <name>sn-glycerol 3-phosphate</name>
        <dbReference type="ChEBI" id="CHEBI:57597"/>
    </ligand>
</feature>
<feature type="binding site" evidence="1">
    <location>
        <position position="107"/>
    </location>
    <ligand>
        <name>sn-glycerol 3-phosphate</name>
        <dbReference type="ChEBI" id="CHEBI:57597"/>
    </ligand>
</feature>
<feature type="binding site" evidence="1">
    <location>
        <position position="109"/>
    </location>
    <ligand>
        <name>sn-glycerol 3-phosphate</name>
        <dbReference type="ChEBI" id="CHEBI:57597"/>
    </ligand>
</feature>
<feature type="binding site" evidence="1">
    <location>
        <position position="111"/>
    </location>
    <ligand>
        <name>NADPH</name>
        <dbReference type="ChEBI" id="CHEBI:57783"/>
    </ligand>
</feature>
<feature type="binding site" evidence="1">
    <location>
        <position position="161"/>
    </location>
    <ligand>
        <name>sn-glycerol 3-phosphate</name>
        <dbReference type="ChEBI" id="CHEBI:57597"/>
    </ligand>
</feature>
<feature type="binding site" evidence="1">
    <location>
        <position position="214"/>
    </location>
    <ligand>
        <name>sn-glycerol 3-phosphate</name>
        <dbReference type="ChEBI" id="CHEBI:57597"/>
    </ligand>
</feature>
<feature type="binding site" evidence="1">
    <location>
        <position position="224"/>
    </location>
    <ligand>
        <name>sn-glycerol 3-phosphate</name>
        <dbReference type="ChEBI" id="CHEBI:57597"/>
    </ligand>
</feature>
<feature type="binding site" evidence="1">
    <location>
        <position position="225"/>
    </location>
    <ligand>
        <name>NADPH</name>
        <dbReference type="ChEBI" id="CHEBI:57783"/>
    </ligand>
</feature>
<feature type="binding site" evidence="1">
    <location>
        <position position="225"/>
    </location>
    <ligand>
        <name>sn-glycerol 3-phosphate</name>
        <dbReference type="ChEBI" id="CHEBI:57597"/>
    </ligand>
</feature>
<feature type="binding site" evidence="1">
    <location>
        <position position="226"/>
    </location>
    <ligand>
        <name>sn-glycerol 3-phosphate</name>
        <dbReference type="ChEBI" id="CHEBI:57597"/>
    </ligand>
</feature>
<feature type="binding site" evidence="1">
    <location>
        <position position="249"/>
    </location>
    <ligand>
        <name>NADPH</name>
        <dbReference type="ChEBI" id="CHEBI:57783"/>
    </ligand>
</feature>
<feature type="binding site" evidence="1">
    <location>
        <position position="251"/>
    </location>
    <ligand>
        <name>NADPH</name>
        <dbReference type="ChEBI" id="CHEBI:57783"/>
    </ligand>
</feature>
<evidence type="ECO:0000255" key="1">
    <source>
        <dbReference type="HAMAP-Rule" id="MF_00394"/>
    </source>
</evidence>
<protein>
    <recommendedName>
        <fullName evidence="1">Glycerol-3-phosphate dehydrogenase [NAD(P)+]</fullName>
        <ecNumber evidence="1">1.1.1.94</ecNumber>
    </recommendedName>
    <alternativeName>
        <fullName evidence="1">NAD(P)(+)-dependent glycerol-3-phosphate dehydrogenase</fullName>
    </alternativeName>
    <alternativeName>
        <fullName evidence="1">NAD(P)H-dependent dihydroxyacetone-phosphate reductase</fullName>
    </alternativeName>
</protein>
<comment type="function">
    <text evidence="1">Catalyzes the reduction of the glycolytic intermediate dihydroxyacetone phosphate (DHAP) to sn-glycerol 3-phosphate (G3P), the key precursor for phospholipid synthesis.</text>
</comment>
<comment type="catalytic activity">
    <reaction evidence="1">
        <text>sn-glycerol 3-phosphate + NAD(+) = dihydroxyacetone phosphate + NADH + H(+)</text>
        <dbReference type="Rhea" id="RHEA:11092"/>
        <dbReference type="ChEBI" id="CHEBI:15378"/>
        <dbReference type="ChEBI" id="CHEBI:57540"/>
        <dbReference type="ChEBI" id="CHEBI:57597"/>
        <dbReference type="ChEBI" id="CHEBI:57642"/>
        <dbReference type="ChEBI" id="CHEBI:57945"/>
        <dbReference type="EC" id="1.1.1.94"/>
    </reaction>
    <physiologicalReaction direction="right-to-left" evidence="1">
        <dbReference type="Rhea" id="RHEA:11094"/>
    </physiologicalReaction>
</comment>
<comment type="catalytic activity">
    <reaction evidence="1">
        <text>sn-glycerol 3-phosphate + NADP(+) = dihydroxyacetone phosphate + NADPH + H(+)</text>
        <dbReference type="Rhea" id="RHEA:11096"/>
        <dbReference type="ChEBI" id="CHEBI:15378"/>
        <dbReference type="ChEBI" id="CHEBI:57597"/>
        <dbReference type="ChEBI" id="CHEBI:57642"/>
        <dbReference type="ChEBI" id="CHEBI:57783"/>
        <dbReference type="ChEBI" id="CHEBI:58349"/>
        <dbReference type="EC" id="1.1.1.94"/>
    </reaction>
    <physiologicalReaction direction="right-to-left" evidence="1">
        <dbReference type="Rhea" id="RHEA:11098"/>
    </physiologicalReaction>
</comment>
<comment type="pathway">
    <text evidence="1">Membrane lipid metabolism; glycerophospholipid metabolism.</text>
</comment>
<comment type="subcellular location">
    <subcellularLocation>
        <location evidence="1">Cytoplasm</location>
    </subcellularLocation>
</comment>
<comment type="similarity">
    <text evidence="1">Belongs to the NAD-dependent glycerol-3-phosphate dehydrogenase family.</text>
</comment>